<reference key="1">
    <citation type="journal article" date="2006" name="J. Bacteriol.">
        <title>Complete genome sequence of Yersinia pestis strains Antiqua and Nepal516: evidence of gene reduction in an emerging pathogen.</title>
        <authorList>
            <person name="Chain P.S.G."/>
            <person name="Hu P."/>
            <person name="Malfatti S.A."/>
            <person name="Radnedge L."/>
            <person name="Larimer F."/>
            <person name="Vergez L.M."/>
            <person name="Worsham P."/>
            <person name="Chu M.C."/>
            <person name="Andersen G.L."/>
        </authorList>
    </citation>
    <scope>NUCLEOTIDE SEQUENCE [LARGE SCALE GENOMIC DNA]</scope>
    <source>
        <strain>Antiqua</strain>
    </source>
</reference>
<comment type="function">
    <text evidence="1">Catalyzes the transfer of the L-Ara4N moiety of the glycolipid undecaprenyl phosphate-alpha-L-Ara4N to lipid A. The modified arabinose is attached to lipid A and is required for resistance to polymyxin and cationic antimicrobial peptides.</text>
</comment>
<comment type="catalytic activity">
    <reaction evidence="1">
        <text>4-amino-4-deoxy-alpha-L-arabinopyranosyl di-trans,octa-cis-undecaprenyl phosphate + lipid IVA = lipid IIA + di-trans,octa-cis-undecaprenyl phosphate.</text>
        <dbReference type="EC" id="2.4.2.43"/>
    </reaction>
</comment>
<comment type="pathway">
    <text evidence="1">Lipopolysaccharide metabolism; 4-amino-4-deoxy-beta-L-arabinose-lipid A biosynthesis.</text>
</comment>
<comment type="subcellular location">
    <subcellularLocation>
        <location evidence="1">Cell inner membrane</location>
        <topology evidence="1">Multi-pass membrane protein</topology>
    </subcellularLocation>
</comment>
<comment type="similarity">
    <text evidence="1">Belongs to the glycosyltransferase 83 family.</text>
</comment>
<gene>
    <name evidence="1" type="primary">arnT</name>
    <name type="ordered locus">YPA_1762</name>
</gene>
<name>ARNT_YERPA</name>
<organism>
    <name type="scientific">Yersinia pestis bv. Antiqua (strain Antiqua)</name>
    <dbReference type="NCBI Taxonomy" id="360102"/>
    <lineage>
        <taxon>Bacteria</taxon>
        <taxon>Pseudomonadati</taxon>
        <taxon>Pseudomonadota</taxon>
        <taxon>Gammaproteobacteria</taxon>
        <taxon>Enterobacterales</taxon>
        <taxon>Yersiniaceae</taxon>
        <taxon>Yersinia</taxon>
    </lineage>
</organism>
<sequence>MKLLKDSGAALLALFFVLVYLLPVNSRLLWQPDETRYAEISREMLQRGDWVVPYFMDIRYFEKPVAGYWFNNISQWIFGDSNFAVRFGSIFSTALSAVLVYWLATLLWRNRSTSVLATLIYLSFLLVFGIGTYAVLDPMISLWLTAAMVSFYLTLKAENWQQKVGAYALLGVACGMGFMTKGFLALAVPVIAVLPIVIQQKRIKDLVVFGPIAIVCAVLLSLPWALAIAQREPDFWNYFFWVEHIQRFAEASAQHKSPIWYYLPILCIGVLPWLGLLPGALFKGWRERATKPELFFLLSWVVMPLLFFSVAKGKLPTYILPCMAPLSLLMAAYATDCANNIRMRALKINGVINLLFGVACALVIVVIGLGLVKDIVAYGPQENQKVWLGVLAFAGWGVTGFITLRNNARNWRWAAACPLLFILLVGYLIPQQVVDSKQPQNFIKNNFSELSSSRYVLTDSVGVAAGLAWELKRSDILMFSEKGELTYGLAYPDSQDNYISNDDFPTWLAQARKEGDVSLVVQLAKNEALPAHLPPADKVNLMNRLALLWYQKTP</sequence>
<dbReference type="EC" id="2.4.2.43" evidence="1"/>
<dbReference type="EMBL" id="CP000308">
    <property type="protein sequence ID" value="ABG13728.1"/>
    <property type="molecule type" value="Genomic_DNA"/>
</dbReference>
<dbReference type="RefSeq" id="WP_002211821.1">
    <property type="nucleotide sequence ID" value="NZ_CP009906.1"/>
</dbReference>
<dbReference type="SMR" id="Q1C744"/>
<dbReference type="CAZy" id="GT83">
    <property type="family name" value="Glycosyltransferase Family 83"/>
</dbReference>
<dbReference type="GeneID" id="57976259"/>
<dbReference type="KEGG" id="ypa:YPA_1762"/>
<dbReference type="UniPathway" id="UPA00037"/>
<dbReference type="Proteomes" id="UP000001971">
    <property type="component" value="Chromosome"/>
</dbReference>
<dbReference type="GO" id="GO:0005886">
    <property type="term" value="C:plasma membrane"/>
    <property type="evidence" value="ECO:0007669"/>
    <property type="project" value="UniProtKB-SubCell"/>
</dbReference>
<dbReference type="GO" id="GO:0103015">
    <property type="term" value="F:4-amino-4-deoxy-L-arabinose transferase activity"/>
    <property type="evidence" value="ECO:0007669"/>
    <property type="project" value="UniProtKB-EC"/>
</dbReference>
<dbReference type="GO" id="GO:0000030">
    <property type="term" value="F:mannosyltransferase activity"/>
    <property type="evidence" value="ECO:0007669"/>
    <property type="project" value="InterPro"/>
</dbReference>
<dbReference type="GO" id="GO:0009245">
    <property type="term" value="P:lipid A biosynthetic process"/>
    <property type="evidence" value="ECO:0007669"/>
    <property type="project" value="UniProtKB-UniRule"/>
</dbReference>
<dbReference type="GO" id="GO:0009103">
    <property type="term" value="P:lipopolysaccharide biosynthetic process"/>
    <property type="evidence" value="ECO:0007669"/>
    <property type="project" value="UniProtKB-KW"/>
</dbReference>
<dbReference type="GO" id="GO:0006493">
    <property type="term" value="P:protein O-linked glycosylation"/>
    <property type="evidence" value="ECO:0007669"/>
    <property type="project" value="InterPro"/>
</dbReference>
<dbReference type="GO" id="GO:0010041">
    <property type="term" value="P:response to iron(III) ion"/>
    <property type="evidence" value="ECO:0007669"/>
    <property type="project" value="TreeGrafter"/>
</dbReference>
<dbReference type="HAMAP" id="MF_01165">
    <property type="entry name" value="ArnT_transfer"/>
    <property type="match status" value="1"/>
</dbReference>
<dbReference type="InterPro" id="IPR022839">
    <property type="entry name" value="ArnT_tfrase"/>
</dbReference>
<dbReference type="InterPro" id="IPR003342">
    <property type="entry name" value="Glyco_trans_39/83"/>
</dbReference>
<dbReference type="InterPro" id="IPR050297">
    <property type="entry name" value="LipidA_mod_glycosyltrf_83"/>
</dbReference>
<dbReference type="NCBIfam" id="NF009784">
    <property type="entry name" value="PRK13279.1"/>
    <property type="match status" value="1"/>
</dbReference>
<dbReference type="PANTHER" id="PTHR33908">
    <property type="entry name" value="MANNOSYLTRANSFERASE YKCB-RELATED"/>
    <property type="match status" value="1"/>
</dbReference>
<dbReference type="PANTHER" id="PTHR33908:SF3">
    <property type="entry name" value="UNDECAPRENYL PHOSPHATE-ALPHA-4-AMINO-4-DEOXY-L-ARABINOSE ARABINOSYL TRANSFERASE"/>
    <property type="match status" value="1"/>
</dbReference>
<dbReference type="Pfam" id="PF02366">
    <property type="entry name" value="PMT"/>
    <property type="match status" value="1"/>
</dbReference>
<evidence type="ECO:0000255" key="1">
    <source>
        <dbReference type="HAMAP-Rule" id="MF_01165"/>
    </source>
</evidence>
<accession>Q1C744</accession>
<proteinExistence type="inferred from homology"/>
<feature type="chain" id="PRO_1000065670" description="Undecaprenyl phosphate-alpha-4-amino-4-deoxy-L-arabinose arabinosyl transferase">
    <location>
        <begin position="1"/>
        <end position="554"/>
    </location>
</feature>
<feature type="transmembrane region" description="Helical" evidence="1">
    <location>
        <begin position="4"/>
        <end position="24"/>
    </location>
</feature>
<feature type="transmembrane region" description="Helical" evidence="1">
    <location>
        <begin position="87"/>
        <end position="107"/>
    </location>
</feature>
<feature type="transmembrane region" description="Helical" evidence="1">
    <location>
        <begin position="115"/>
        <end position="135"/>
    </location>
</feature>
<feature type="transmembrane region" description="Helical" evidence="1">
    <location>
        <begin position="178"/>
        <end position="198"/>
    </location>
</feature>
<feature type="transmembrane region" description="Helical" evidence="1">
    <location>
        <begin position="206"/>
        <end position="226"/>
    </location>
</feature>
<feature type="transmembrane region" description="Helical" evidence="1">
    <location>
        <begin position="262"/>
        <end position="282"/>
    </location>
</feature>
<feature type="transmembrane region" description="Helical" evidence="1">
    <location>
        <begin position="293"/>
        <end position="313"/>
    </location>
</feature>
<feature type="transmembrane region" description="Helical" evidence="1">
    <location>
        <begin position="315"/>
        <end position="335"/>
    </location>
</feature>
<feature type="transmembrane region" description="Helical" evidence="1">
    <location>
        <begin position="351"/>
        <end position="371"/>
    </location>
</feature>
<feature type="transmembrane region" description="Helical" evidence="1">
    <location>
        <begin position="384"/>
        <end position="404"/>
    </location>
</feature>
<feature type="transmembrane region" description="Helical" evidence="1">
    <location>
        <begin position="414"/>
        <end position="434"/>
    </location>
</feature>
<keyword id="KW-0997">Cell inner membrane</keyword>
<keyword id="KW-1003">Cell membrane</keyword>
<keyword id="KW-0328">Glycosyltransferase</keyword>
<keyword id="KW-0441">Lipid A biosynthesis</keyword>
<keyword id="KW-0444">Lipid biosynthesis</keyword>
<keyword id="KW-0443">Lipid metabolism</keyword>
<keyword id="KW-0448">Lipopolysaccharide biosynthesis</keyword>
<keyword id="KW-0472">Membrane</keyword>
<keyword id="KW-0808">Transferase</keyword>
<keyword id="KW-0812">Transmembrane</keyword>
<keyword id="KW-1133">Transmembrane helix</keyword>
<protein>
    <recommendedName>
        <fullName evidence="1">Undecaprenyl phosphate-alpha-4-amino-4-deoxy-L-arabinose arabinosyl transferase</fullName>
        <ecNumber evidence="1">2.4.2.43</ecNumber>
    </recommendedName>
    <alternativeName>
        <fullName evidence="1">4-amino-4-deoxy-L-arabinose lipid A transferase</fullName>
    </alternativeName>
    <alternativeName>
        <fullName evidence="1">Lipid IV(A) 4-amino-4-deoxy-L-arabinosyltransferase</fullName>
    </alternativeName>
    <alternativeName>
        <fullName evidence="1">Undecaprenyl phosphate-alpha-L-Ara4N transferase</fullName>
    </alternativeName>
</protein>